<comment type="function">
    <text evidence="1">Catalyzes a salvage reaction resulting in the formation of AMP, that is energically less costly than de novo synthesis.</text>
</comment>
<comment type="catalytic activity">
    <reaction evidence="1">
        <text>AMP + diphosphate = 5-phospho-alpha-D-ribose 1-diphosphate + adenine</text>
        <dbReference type="Rhea" id="RHEA:16609"/>
        <dbReference type="ChEBI" id="CHEBI:16708"/>
        <dbReference type="ChEBI" id="CHEBI:33019"/>
        <dbReference type="ChEBI" id="CHEBI:58017"/>
        <dbReference type="ChEBI" id="CHEBI:456215"/>
        <dbReference type="EC" id="2.4.2.7"/>
    </reaction>
</comment>
<comment type="pathway">
    <text evidence="1">Purine metabolism; AMP biosynthesis via salvage pathway; AMP from adenine: step 1/1.</text>
</comment>
<comment type="subunit">
    <text evidence="1">Homodimer.</text>
</comment>
<comment type="subcellular location">
    <subcellularLocation>
        <location evidence="1">Cytoplasm</location>
    </subcellularLocation>
</comment>
<comment type="similarity">
    <text evidence="1">Belongs to the purine/pyrimidine phosphoribosyltransferase family.</text>
</comment>
<feature type="chain" id="PRO_1000073807" description="Adenine phosphoribosyltransferase">
    <location>
        <begin position="1"/>
        <end position="172"/>
    </location>
</feature>
<proteinExistence type="inferred from homology"/>
<dbReference type="EC" id="2.4.2.7" evidence="1"/>
<dbReference type="EMBL" id="CP000703">
    <property type="protein sequence ID" value="ABQ49482.1"/>
    <property type="molecule type" value="Genomic_DNA"/>
</dbReference>
<dbReference type="RefSeq" id="WP_000364542.1">
    <property type="nucleotide sequence ID" value="NC_009487.1"/>
</dbReference>
<dbReference type="SMR" id="A5ITF9"/>
<dbReference type="KEGG" id="saj:SaurJH9_1692"/>
<dbReference type="HOGENOM" id="CLU_063339_3_0_9"/>
<dbReference type="UniPathway" id="UPA00588">
    <property type="reaction ID" value="UER00646"/>
</dbReference>
<dbReference type="GO" id="GO:0005737">
    <property type="term" value="C:cytoplasm"/>
    <property type="evidence" value="ECO:0007669"/>
    <property type="project" value="UniProtKB-SubCell"/>
</dbReference>
<dbReference type="GO" id="GO:0002055">
    <property type="term" value="F:adenine binding"/>
    <property type="evidence" value="ECO:0007669"/>
    <property type="project" value="TreeGrafter"/>
</dbReference>
<dbReference type="GO" id="GO:0003999">
    <property type="term" value="F:adenine phosphoribosyltransferase activity"/>
    <property type="evidence" value="ECO:0007669"/>
    <property type="project" value="UniProtKB-UniRule"/>
</dbReference>
<dbReference type="GO" id="GO:0016208">
    <property type="term" value="F:AMP binding"/>
    <property type="evidence" value="ECO:0007669"/>
    <property type="project" value="TreeGrafter"/>
</dbReference>
<dbReference type="GO" id="GO:0006168">
    <property type="term" value="P:adenine salvage"/>
    <property type="evidence" value="ECO:0007669"/>
    <property type="project" value="InterPro"/>
</dbReference>
<dbReference type="GO" id="GO:0044209">
    <property type="term" value="P:AMP salvage"/>
    <property type="evidence" value="ECO:0007669"/>
    <property type="project" value="UniProtKB-UniRule"/>
</dbReference>
<dbReference type="GO" id="GO:0006166">
    <property type="term" value="P:purine ribonucleoside salvage"/>
    <property type="evidence" value="ECO:0007669"/>
    <property type="project" value="UniProtKB-KW"/>
</dbReference>
<dbReference type="CDD" id="cd06223">
    <property type="entry name" value="PRTases_typeI"/>
    <property type="match status" value="1"/>
</dbReference>
<dbReference type="FunFam" id="3.40.50.2020:FF:000004">
    <property type="entry name" value="Adenine phosphoribosyltransferase"/>
    <property type="match status" value="1"/>
</dbReference>
<dbReference type="Gene3D" id="3.40.50.2020">
    <property type="match status" value="1"/>
</dbReference>
<dbReference type="HAMAP" id="MF_00004">
    <property type="entry name" value="Aden_phosphoribosyltr"/>
    <property type="match status" value="1"/>
</dbReference>
<dbReference type="InterPro" id="IPR005764">
    <property type="entry name" value="Ade_phspho_trans"/>
</dbReference>
<dbReference type="InterPro" id="IPR000836">
    <property type="entry name" value="PRibTrfase_dom"/>
</dbReference>
<dbReference type="InterPro" id="IPR029057">
    <property type="entry name" value="PRTase-like"/>
</dbReference>
<dbReference type="InterPro" id="IPR050054">
    <property type="entry name" value="UPRTase/APRTase"/>
</dbReference>
<dbReference type="NCBIfam" id="TIGR01090">
    <property type="entry name" value="apt"/>
    <property type="match status" value="1"/>
</dbReference>
<dbReference type="NCBIfam" id="NF002633">
    <property type="entry name" value="PRK02304.1-2"/>
    <property type="match status" value="1"/>
</dbReference>
<dbReference type="NCBIfam" id="NF002634">
    <property type="entry name" value="PRK02304.1-3"/>
    <property type="match status" value="1"/>
</dbReference>
<dbReference type="NCBIfam" id="NF002636">
    <property type="entry name" value="PRK02304.1-5"/>
    <property type="match status" value="1"/>
</dbReference>
<dbReference type="PANTHER" id="PTHR32315">
    <property type="entry name" value="ADENINE PHOSPHORIBOSYLTRANSFERASE"/>
    <property type="match status" value="1"/>
</dbReference>
<dbReference type="PANTHER" id="PTHR32315:SF3">
    <property type="entry name" value="ADENINE PHOSPHORIBOSYLTRANSFERASE"/>
    <property type="match status" value="1"/>
</dbReference>
<dbReference type="Pfam" id="PF00156">
    <property type="entry name" value="Pribosyltran"/>
    <property type="match status" value="1"/>
</dbReference>
<dbReference type="SUPFAM" id="SSF53271">
    <property type="entry name" value="PRTase-like"/>
    <property type="match status" value="1"/>
</dbReference>
<evidence type="ECO:0000255" key="1">
    <source>
        <dbReference type="HAMAP-Rule" id="MF_00004"/>
    </source>
</evidence>
<gene>
    <name evidence="1" type="primary">apt</name>
    <name type="ordered locus">SaurJH9_1692</name>
</gene>
<protein>
    <recommendedName>
        <fullName evidence="1">Adenine phosphoribosyltransferase</fullName>
        <shortName evidence="1">APRT</shortName>
        <ecNumber evidence="1">2.4.2.7</ecNumber>
    </recommendedName>
</protein>
<accession>A5ITF9</accession>
<keyword id="KW-0963">Cytoplasm</keyword>
<keyword id="KW-0328">Glycosyltransferase</keyword>
<keyword id="KW-0660">Purine salvage</keyword>
<keyword id="KW-0808">Transferase</keyword>
<reference key="1">
    <citation type="submission" date="2007-05" db="EMBL/GenBank/DDBJ databases">
        <title>Complete sequence of chromosome of Staphylococcus aureus subsp. aureus JH9.</title>
        <authorList>
            <consortium name="US DOE Joint Genome Institute"/>
            <person name="Copeland A."/>
            <person name="Lucas S."/>
            <person name="Lapidus A."/>
            <person name="Barry K."/>
            <person name="Detter J.C."/>
            <person name="Glavina del Rio T."/>
            <person name="Hammon N."/>
            <person name="Israni S."/>
            <person name="Pitluck S."/>
            <person name="Chain P."/>
            <person name="Malfatti S."/>
            <person name="Shin M."/>
            <person name="Vergez L."/>
            <person name="Schmutz J."/>
            <person name="Larimer F."/>
            <person name="Land M."/>
            <person name="Hauser L."/>
            <person name="Kyrpides N."/>
            <person name="Kim E."/>
            <person name="Tomasz A."/>
            <person name="Richardson P."/>
        </authorList>
    </citation>
    <scope>NUCLEOTIDE SEQUENCE [LARGE SCALE GENOMIC DNA]</scope>
    <source>
        <strain>JH9</strain>
    </source>
</reference>
<sequence>MDLKQYVSEVQDWPKPGVSFKDITTIMDNGEAYGYATDKIVEYAKDRDVDIVVGPEARGFIIGCPVAYSMGIGFAPVRKEGKLPREVIRYEYDLEYGTNVLTMHKDAIKPGQRVLITDDLLATGGTIEAAIKLVEKLGGIVVGIAFIIELKYLNGIEKIKDYDVMSLISYDE</sequence>
<organism>
    <name type="scientific">Staphylococcus aureus (strain JH9)</name>
    <dbReference type="NCBI Taxonomy" id="359786"/>
    <lineage>
        <taxon>Bacteria</taxon>
        <taxon>Bacillati</taxon>
        <taxon>Bacillota</taxon>
        <taxon>Bacilli</taxon>
        <taxon>Bacillales</taxon>
        <taxon>Staphylococcaceae</taxon>
        <taxon>Staphylococcus</taxon>
    </lineage>
</organism>
<name>APT_STAA9</name>